<keyword id="KW-0963">Cytoplasm</keyword>
<keyword id="KW-0648">Protein biosynthesis</keyword>
<evidence type="ECO:0000255" key="1">
    <source>
        <dbReference type="HAMAP-Rule" id="MF_00040"/>
    </source>
</evidence>
<gene>
    <name evidence="1" type="primary">frr</name>
    <name type="ordered locus">CLD_2208</name>
</gene>
<proteinExistence type="inferred from homology"/>
<reference key="1">
    <citation type="journal article" date="2007" name="PLoS ONE">
        <title>Analysis of the neurotoxin complex genes in Clostridium botulinum A1-A4 and B1 strains: BoNT/A3, /Ba4 and /B1 clusters are located within plasmids.</title>
        <authorList>
            <person name="Smith T.J."/>
            <person name="Hill K.K."/>
            <person name="Foley B.T."/>
            <person name="Detter J.C."/>
            <person name="Munk A.C."/>
            <person name="Bruce D.C."/>
            <person name="Doggett N.A."/>
            <person name="Smith L.A."/>
            <person name="Marks J.D."/>
            <person name="Xie G."/>
            <person name="Brettin T.S."/>
        </authorList>
    </citation>
    <scope>NUCLEOTIDE SEQUENCE [LARGE SCALE GENOMIC DNA]</scope>
    <source>
        <strain>Okra / Type B1</strain>
    </source>
</reference>
<comment type="function">
    <text evidence="1">Responsible for the release of ribosomes from messenger RNA at the termination of protein biosynthesis. May increase the efficiency of translation by recycling ribosomes from one round of translation to another.</text>
</comment>
<comment type="subcellular location">
    <subcellularLocation>
        <location evidence="1">Cytoplasm</location>
    </subcellularLocation>
</comment>
<comment type="similarity">
    <text evidence="1">Belongs to the RRF family.</text>
</comment>
<dbReference type="EMBL" id="CP000939">
    <property type="protein sequence ID" value="ACA45805.1"/>
    <property type="molecule type" value="Genomic_DNA"/>
</dbReference>
<dbReference type="RefSeq" id="WP_003362574.1">
    <property type="nucleotide sequence ID" value="NC_010516.1"/>
</dbReference>
<dbReference type="SMR" id="B1II63"/>
<dbReference type="KEGG" id="cbb:CLD_2208"/>
<dbReference type="HOGENOM" id="CLU_073981_2_0_9"/>
<dbReference type="Proteomes" id="UP000008541">
    <property type="component" value="Chromosome"/>
</dbReference>
<dbReference type="GO" id="GO:0005737">
    <property type="term" value="C:cytoplasm"/>
    <property type="evidence" value="ECO:0007669"/>
    <property type="project" value="UniProtKB-SubCell"/>
</dbReference>
<dbReference type="GO" id="GO:0043023">
    <property type="term" value="F:ribosomal large subunit binding"/>
    <property type="evidence" value="ECO:0007669"/>
    <property type="project" value="TreeGrafter"/>
</dbReference>
<dbReference type="GO" id="GO:0006415">
    <property type="term" value="P:translational termination"/>
    <property type="evidence" value="ECO:0007669"/>
    <property type="project" value="UniProtKB-UniRule"/>
</dbReference>
<dbReference type="CDD" id="cd00520">
    <property type="entry name" value="RRF"/>
    <property type="match status" value="1"/>
</dbReference>
<dbReference type="FunFam" id="1.10.132.20:FF:000001">
    <property type="entry name" value="Ribosome-recycling factor"/>
    <property type="match status" value="1"/>
</dbReference>
<dbReference type="FunFam" id="3.30.1360.40:FF:000001">
    <property type="entry name" value="Ribosome-recycling factor"/>
    <property type="match status" value="1"/>
</dbReference>
<dbReference type="Gene3D" id="3.30.1360.40">
    <property type="match status" value="1"/>
</dbReference>
<dbReference type="Gene3D" id="1.10.132.20">
    <property type="entry name" value="Ribosome-recycling factor"/>
    <property type="match status" value="1"/>
</dbReference>
<dbReference type="HAMAP" id="MF_00040">
    <property type="entry name" value="RRF"/>
    <property type="match status" value="1"/>
</dbReference>
<dbReference type="InterPro" id="IPR002661">
    <property type="entry name" value="Ribosome_recyc_fac"/>
</dbReference>
<dbReference type="InterPro" id="IPR023584">
    <property type="entry name" value="Ribosome_recyc_fac_dom"/>
</dbReference>
<dbReference type="InterPro" id="IPR036191">
    <property type="entry name" value="RRF_sf"/>
</dbReference>
<dbReference type="NCBIfam" id="TIGR00496">
    <property type="entry name" value="frr"/>
    <property type="match status" value="1"/>
</dbReference>
<dbReference type="PANTHER" id="PTHR20982:SF3">
    <property type="entry name" value="MITOCHONDRIAL RIBOSOME RECYCLING FACTOR PSEUDO 1"/>
    <property type="match status" value="1"/>
</dbReference>
<dbReference type="PANTHER" id="PTHR20982">
    <property type="entry name" value="RIBOSOME RECYCLING FACTOR"/>
    <property type="match status" value="1"/>
</dbReference>
<dbReference type="Pfam" id="PF01765">
    <property type="entry name" value="RRF"/>
    <property type="match status" value="1"/>
</dbReference>
<dbReference type="SUPFAM" id="SSF55194">
    <property type="entry name" value="Ribosome recycling factor, RRF"/>
    <property type="match status" value="1"/>
</dbReference>
<accession>B1II63</accession>
<feature type="chain" id="PRO_1000090728" description="Ribosome-recycling factor">
    <location>
        <begin position="1"/>
        <end position="184"/>
    </location>
</feature>
<organism>
    <name type="scientific">Clostridium botulinum (strain Okra / Type B1)</name>
    <dbReference type="NCBI Taxonomy" id="498213"/>
    <lineage>
        <taxon>Bacteria</taxon>
        <taxon>Bacillati</taxon>
        <taxon>Bacillota</taxon>
        <taxon>Clostridia</taxon>
        <taxon>Eubacteriales</taxon>
        <taxon>Clostridiaceae</taxon>
        <taxon>Clostridium</taxon>
    </lineage>
</organism>
<sequence length="184" mass="20605">MIKEILKKADEKMGKTIVALKRELASMKAGRANPAMLDRIEAEYYGSMTPLNQLGNISVPEARVLLIQPWDKSALSAIEKAILKSDLGLNPSNDGTVIRLVIPELTEETRKNIVKTVKKTGEEAKVAIRSIRRDCNDDVKNLKKDDVSEDDIKKAEDDIQKKTDKYIKEIDSIISAKEKEILSI</sequence>
<protein>
    <recommendedName>
        <fullName evidence="1">Ribosome-recycling factor</fullName>
        <shortName evidence="1">RRF</shortName>
    </recommendedName>
    <alternativeName>
        <fullName evidence="1">Ribosome-releasing factor</fullName>
    </alternativeName>
</protein>
<name>RRF_CLOBK</name>